<proteinExistence type="inferred from homology"/>
<organism>
    <name type="scientific">Staphylococcus aureus (strain MW2)</name>
    <dbReference type="NCBI Taxonomy" id="196620"/>
    <lineage>
        <taxon>Bacteria</taxon>
        <taxon>Bacillati</taxon>
        <taxon>Bacillota</taxon>
        <taxon>Bacilli</taxon>
        <taxon>Bacillales</taxon>
        <taxon>Staphylococcaceae</taxon>
        <taxon>Staphylococcus</taxon>
    </lineage>
</organism>
<gene>
    <name evidence="2" type="primary">ddl</name>
    <name type="synonym">ddlA</name>
    <name type="ordered locus">MW2006</name>
</gene>
<sequence>MTKENICIVFGGKSAEHEVSILTAQNVLNAIDKDKYHVDIIYITNDGDWRKQNNITAEIISTDELHLENGEALEISQLLKESSSGQPYDAVFPLLHGPNGEDGTIQGLFEVLDVPYVGNGVLSAASSMDKLVMKQLFEHRGLPQLPYISFLRSEYEKYEHNILKLVNDKLNYPVFVKPANLGSSVGISKCNNEAELKEGIKEAFQFDRKLVIEQGVNAREIEVAVLGNDYPEATWPGEVVKDVAFYDYKSKYKDGKVQLQIPADLDEDVQLTLRNMALEAFKATDCSGLVRADFFVTEDNQIYINETNAMPGFTAFSMYPKLWENMGLSYPELITKLIELAKERHQDKQKNKYKID</sequence>
<dbReference type="EC" id="6.3.2.4" evidence="2"/>
<dbReference type="EMBL" id="BA000033">
    <property type="protein sequence ID" value="BAB95871.1"/>
    <property type="molecule type" value="Genomic_DNA"/>
</dbReference>
<dbReference type="RefSeq" id="WP_000159627.1">
    <property type="nucleotide sequence ID" value="NC_003923.1"/>
</dbReference>
<dbReference type="SMR" id="Q8NVH8"/>
<dbReference type="KEGG" id="sam:MW2006"/>
<dbReference type="HOGENOM" id="CLU_039268_0_0_9"/>
<dbReference type="UniPathway" id="UPA00219"/>
<dbReference type="GO" id="GO:0005829">
    <property type="term" value="C:cytosol"/>
    <property type="evidence" value="ECO:0007669"/>
    <property type="project" value="TreeGrafter"/>
</dbReference>
<dbReference type="GO" id="GO:0005524">
    <property type="term" value="F:ATP binding"/>
    <property type="evidence" value="ECO:0007669"/>
    <property type="project" value="UniProtKB-KW"/>
</dbReference>
<dbReference type="GO" id="GO:0008716">
    <property type="term" value="F:D-alanine-D-alanine ligase activity"/>
    <property type="evidence" value="ECO:0007669"/>
    <property type="project" value="UniProtKB-UniRule"/>
</dbReference>
<dbReference type="GO" id="GO:0046872">
    <property type="term" value="F:metal ion binding"/>
    <property type="evidence" value="ECO:0007669"/>
    <property type="project" value="UniProtKB-KW"/>
</dbReference>
<dbReference type="GO" id="GO:0071555">
    <property type="term" value="P:cell wall organization"/>
    <property type="evidence" value="ECO:0007669"/>
    <property type="project" value="UniProtKB-KW"/>
</dbReference>
<dbReference type="GO" id="GO:0009252">
    <property type="term" value="P:peptidoglycan biosynthetic process"/>
    <property type="evidence" value="ECO:0007669"/>
    <property type="project" value="UniProtKB-UniRule"/>
</dbReference>
<dbReference type="GO" id="GO:0008360">
    <property type="term" value="P:regulation of cell shape"/>
    <property type="evidence" value="ECO:0007669"/>
    <property type="project" value="UniProtKB-KW"/>
</dbReference>
<dbReference type="FunFam" id="3.30.1490.20:FF:000007">
    <property type="entry name" value="D-alanine--D-alanine ligase"/>
    <property type="match status" value="1"/>
</dbReference>
<dbReference type="FunFam" id="3.30.470.20:FF:000008">
    <property type="entry name" value="D-alanine--D-alanine ligase"/>
    <property type="match status" value="1"/>
</dbReference>
<dbReference type="FunFam" id="3.40.50.20:FF:000020">
    <property type="entry name" value="D-alanine--D-alanine ligase"/>
    <property type="match status" value="1"/>
</dbReference>
<dbReference type="Gene3D" id="3.40.50.20">
    <property type="match status" value="1"/>
</dbReference>
<dbReference type="Gene3D" id="3.30.1490.20">
    <property type="entry name" value="ATP-grasp fold, A domain"/>
    <property type="match status" value="1"/>
</dbReference>
<dbReference type="Gene3D" id="3.30.470.20">
    <property type="entry name" value="ATP-grasp fold, B domain"/>
    <property type="match status" value="1"/>
</dbReference>
<dbReference type="HAMAP" id="MF_00047">
    <property type="entry name" value="Dala_Dala_lig"/>
    <property type="match status" value="1"/>
</dbReference>
<dbReference type="InterPro" id="IPR011761">
    <property type="entry name" value="ATP-grasp"/>
</dbReference>
<dbReference type="InterPro" id="IPR013815">
    <property type="entry name" value="ATP_grasp_subdomain_1"/>
</dbReference>
<dbReference type="InterPro" id="IPR000291">
    <property type="entry name" value="D-Ala_lig_Van_CS"/>
</dbReference>
<dbReference type="InterPro" id="IPR005905">
    <property type="entry name" value="D_ala_D_ala"/>
</dbReference>
<dbReference type="InterPro" id="IPR011095">
    <property type="entry name" value="Dala_Dala_lig_C"/>
</dbReference>
<dbReference type="InterPro" id="IPR011127">
    <property type="entry name" value="Dala_Dala_lig_N"/>
</dbReference>
<dbReference type="InterPro" id="IPR016185">
    <property type="entry name" value="PreATP-grasp_dom_sf"/>
</dbReference>
<dbReference type="NCBIfam" id="TIGR01205">
    <property type="entry name" value="D_ala_D_alaTIGR"/>
    <property type="match status" value="1"/>
</dbReference>
<dbReference type="NCBIfam" id="NF002526">
    <property type="entry name" value="PRK01966.1-2"/>
    <property type="match status" value="1"/>
</dbReference>
<dbReference type="NCBIfam" id="NF002528">
    <property type="entry name" value="PRK01966.1-4"/>
    <property type="match status" value="1"/>
</dbReference>
<dbReference type="PANTHER" id="PTHR23132">
    <property type="entry name" value="D-ALANINE--D-ALANINE LIGASE"/>
    <property type="match status" value="1"/>
</dbReference>
<dbReference type="PANTHER" id="PTHR23132:SF25">
    <property type="entry name" value="D-ALANINE--D-ALANINE LIGASE A"/>
    <property type="match status" value="1"/>
</dbReference>
<dbReference type="Pfam" id="PF07478">
    <property type="entry name" value="Dala_Dala_lig_C"/>
    <property type="match status" value="1"/>
</dbReference>
<dbReference type="Pfam" id="PF01820">
    <property type="entry name" value="Dala_Dala_lig_N"/>
    <property type="match status" value="1"/>
</dbReference>
<dbReference type="PIRSF" id="PIRSF039102">
    <property type="entry name" value="Ddl/VanB"/>
    <property type="match status" value="1"/>
</dbReference>
<dbReference type="SUPFAM" id="SSF56059">
    <property type="entry name" value="Glutathione synthetase ATP-binding domain-like"/>
    <property type="match status" value="1"/>
</dbReference>
<dbReference type="SUPFAM" id="SSF52440">
    <property type="entry name" value="PreATP-grasp domain"/>
    <property type="match status" value="1"/>
</dbReference>
<dbReference type="PROSITE" id="PS50975">
    <property type="entry name" value="ATP_GRASP"/>
    <property type="match status" value="1"/>
</dbReference>
<dbReference type="PROSITE" id="PS00843">
    <property type="entry name" value="DALA_DALA_LIGASE_1"/>
    <property type="match status" value="1"/>
</dbReference>
<dbReference type="PROSITE" id="PS00844">
    <property type="entry name" value="DALA_DALA_LIGASE_2"/>
    <property type="match status" value="1"/>
</dbReference>
<protein>
    <recommendedName>
        <fullName evidence="2">D-alanine--D-alanine ligase</fullName>
        <ecNumber evidence="2">6.3.2.4</ecNumber>
    </recommendedName>
    <alternativeName>
        <fullName evidence="2">D-Ala-D-Ala ligase</fullName>
    </alternativeName>
    <alternativeName>
        <fullName evidence="2">D-alanylalanine synthetase</fullName>
    </alternativeName>
</protein>
<feature type="chain" id="PRO_0000177879" description="D-alanine--D-alanine ligase">
    <location>
        <begin position="1"/>
        <end position="356"/>
    </location>
</feature>
<feature type="domain" description="ATP-grasp" evidence="2">
    <location>
        <begin position="134"/>
        <end position="339"/>
    </location>
</feature>
<feature type="binding site" evidence="2">
    <location>
        <begin position="167"/>
        <end position="222"/>
    </location>
    <ligand>
        <name>ATP</name>
        <dbReference type="ChEBI" id="CHEBI:30616"/>
    </ligand>
</feature>
<feature type="binding site" evidence="2">
    <location>
        <position position="293"/>
    </location>
    <ligand>
        <name>Mg(2+)</name>
        <dbReference type="ChEBI" id="CHEBI:18420"/>
        <label>1</label>
    </ligand>
</feature>
<feature type="binding site" evidence="2">
    <location>
        <position position="306"/>
    </location>
    <ligand>
        <name>Mg(2+)</name>
        <dbReference type="ChEBI" id="CHEBI:18420"/>
        <label>1</label>
    </ligand>
</feature>
<feature type="binding site" evidence="2">
    <location>
        <position position="306"/>
    </location>
    <ligand>
        <name>Mg(2+)</name>
        <dbReference type="ChEBI" id="CHEBI:18420"/>
        <label>2</label>
    </ligand>
</feature>
<feature type="binding site" evidence="2">
    <location>
        <position position="308"/>
    </location>
    <ligand>
        <name>Mg(2+)</name>
        <dbReference type="ChEBI" id="CHEBI:18420"/>
        <label>2</label>
    </ligand>
</feature>
<reference key="1">
    <citation type="journal article" date="2002" name="Lancet">
        <title>Genome and virulence determinants of high virulence community-acquired MRSA.</title>
        <authorList>
            <person name="Baba T."/>
            <person name="Takeuchi F."/>
            <person name="Kuroda M."/>
            <person name="Yuzawa H."/>
            <person name="Aoki K."/>
            <person name="Oguchi A."/>
            <person name="Nagai Y."/>
            <person name="Iwama N."/>
            <person name="Asano K."/>
            <person name="Naimi T."/>
            <person name="Kuroda H."/>
            <person name="Cui L."/>
            <person name="Yamamoto K."/>
            <person name="Hiramatsu K."/>
        </authorList>
    </citation>
    <scope>NUCLEOTIDE SEQUENCE [LARGE SCALE GENOMIC DNA]</scope>
    <source>
        <strain>MW2</strain>
    </source>
</reference>
<keyword id="KW-0067">ATP-binding</keyword>
<keyword id="KW-0133">Cell shape</keyword>
<keyword id="KW-0961">Cell wall biogenesis/degradation</keyword>
<keyword id="KW-0963">Cytoplasm</keyword>
<keyword id="KW-0436">Ligase</keyword>
<keyword id="KW-0460">Magnesium</keyword>
<keyword id="KW-0464">Manganese</keyword>
<keyword id="KW-0479">Metal-binding</keyword>
<keyword id="KW-0547">Nucleotide-binding</keyword>
<keyword id="KW-0573">Peptidoglycan synthesis</keyword>
<accession>Q8NVH8</accession>
<name>DDL_STAAW</name>
<comment type="function">
    <text evidence="2">Cell wall formation.</text>
</comment>
<comment type="catalytic activity">
    <reaction evidence="2">
        <text>2 D-alanine + ATP = D-alanyl-D-alanine + ADP + phosphate + H(+)</text>
        <dbReference type="Rhea" id="RHEA:11224"/>
        <dbReference type="ChEBI" id="CHEBI:15378"/>
        <dbReference type="ChEBI" id="CHEBI:30616"/>
        <dbReference type="ChEBI" id="CHEBI:43474"/>
        <dbReference type="ChEBI" id="CHEBI:57416"/>
        <dbReference type="ChEBI" id="CHEBI:57822"/>
        <dbReference type="ChEBI" id="CHEBI:456216"/>
        <dbReference type="EC" id="6.3.2.4"/>
    </reaction>
</comment>
<comment type="cofactor">
    <cofactor evidence="1">
        <name>Mg(2+)</name>
        <dbReference type="ChEBI" id="CHEBI:18420"/>
    </cofactor>
    <cofactor evidence="1">
        <name>Mn(2+)</name>
        <dbReference type="ChEBI" id="CHEBI:29035"/>
    </cofactor>
    <text evidence="1">Binds 2 magnesium or manganese ions per subunit.</text>
</comment>
<comment type="pathway">
    <text evidence="2">Cell wall biogenesis; peptidoglycan biosynthesis.</text>
</comment>
<comment type="subcellular location">
    <subcellularLocation>
        <location evidence="2">Cytoplasm</location>
    </subcellularLocation>
</comment>
<comment type="similarity">
    <text evidence="2">Belongs to the D-alanine--D-alanine ligase family.</text>
</comment>
<evidence type="ECO:0000250" key="1"/>
<evidence type="ECO:0000255" key="2">
    <source>
        <dbReference type="HAMAP-Rule" id="MF_00047"/>
    </source>
</evidence>